<protein>
    <recommendedName>
        <fullName evidence="1">Protein P</fullName>
    </recommendedName>
    <domain>
        <recommendedName>
            <fullName evidence="1">DNA-directed DNA polymerase</fullName>
            <ecNumber evidence="1">2.7.7.7</ecNumber>
        </recommendedName>
    </domain>
    <domain>
        <recommendedName>
            <fullName evidence="1">RNA-directed DNA polymerase</fullName>
            <ecNumber evidence="1">2.7.7.49</ecNumber>
        </recommendedName>
    </domain>
    <domain>
        <recommendedName>
            <fullName evidence="1">Ribonuclease H</fullName>
            <ecNumber evidence="1">3.1.26.4</ecNumber>
        </recommendedName>
    </domain>
</protein>
<proteinExistence type="inferred from homology"/>
<organism>
    <name type="scientific">Hepatitis B virus genotype C subtype adr (isolate Japan/Nishioka/1983)</name>
    <name type="common">HBV-C</name>
    <dbReference type="NCBI Taxonomy" id="482133"/>
    <lineage>
        <taxon>Viruses</taxon>
        <taxon>Riboviria</taxon>
        <taxon>Pararnavirae</taxon>
        <taxon>Artverviricota</taxon>
        <taxon>Revtraviricetes</taxon>
        <taxon>Blubervirales</taxon>
        <taxon>Hepadnaviridae</taxon>
        <taxon>Orthohepadnavirus</taxon>
        <taxon>Hepatitis B virus</taxon>
    </lineage>
</organism>
<organismHost>
    <name type="scientific">Homo sapiens</name>
    <name type="common">Human</name>
    <dbReference type="NCBI Taxonomy" id="9606"/>
</organismHost>
<dbReference type="EC" id="2.7.7.7" evidence="1"/>
<dbReference type="EC" id="2.7.7.49" evidence="1"/>
<dbReference type="EC" id="3.1.26.4" evidence="1"/>
<dbReference type="EMBL" id="D00630">
    <property type="status" value="NOT_ANNOTATED_CDS"/>
    <property type="molecule type" value="Genomic_DNA"/>
</dbReference>
<dbReference type="Proteomes" id="UP000007921">
    <property type="component" value="Genome"/>
</dbReference>
<dbReference type="GO" id="GO:0003677">
    <property type="term" value="F:DNA binding"/>
    <property type="evidence" value="ECO:0007669"/>
    <property type="project" value="UniProtKB-UniRule"/>
</dbReference>
<dbReference type="GO" id="GO:0003887">
    <property type="term" value="F:DNA-directed DNA polymerase activity"/>
    <property type="evidence" value="ECO:0007669"/>
    <property type="project" value="UniProtKB-UniRule"/>
</dbReference>
<dbReference type="GO" id="GO:0046872">
    <property type="term" value="F:metal ion binding"/>
    <property type="evidence" value="ECO:0007669"/>
    <property type="project" value="UniProtKB-UniRule"/>
</dbReference>
<dbReference type="GO" id="GO:0003964">
    <property type="term" value="F:RNA-directed DNA polymerase activity"/>
    <property type="evidence" value="ECO:0007669"/>
    <property type="project" value="UniProtKB-UniRule"/>
</dbReference>
<dbReference type="GO" id="GO:0004523">
    <property type="term" value="F:RNA-DNA hybrid ribonuclease activity"/>
    <property type="evidence" value="ECO:0007669"/>
    <property type="project" value="UniProtKB-UniRule"/>
</dbReference>
<dbReference type="GO" id="GO:0006260">
    <property type="term" value="P:DNA replication"/>
    <property type="evidence" value="ECO:0007669"/>
    <property type="project" value="UniProtKB-UniRule"/>
</dbReference>
<dbReference type="GO" id="GO:0052170">
    <property type="term" value="P:symbiont-mediated suppression of host innate immune response"/>
    <property type="evidence" value="ECO:0007669"/>
    <property type="project" value="UniProtKB-UniRule"/>
</dbReference>
<dbReference type="FunFam" id="3.30.70.270:FF:000009">
    <property type="entry name" value="Protein P"/>
    <property type="match status" value="1"/>
</dbReference>
<dbReference type="Gene3D" id="3.30.70.270">
    <property type="match status" value="1"/>
</dbReference>
<dbReference type="HAMAP" id="MF_04073">
    <property type="entry name" value="HBV_DPOL"/>
    <property type="match status" value="1"/>
</dbReference>
<dbReference type="InterPro" id="IPR043502">
    <property type="entry name" value="DNA/RNA_pol_sf"/>
</dbReference>
<dbReference type="InterPro" id="IPR001462">
    <property type="entry name" value="DNApol_viral_C"/>
</dbReference>
<dbReference type="InterPro" id="IPR000201">
    <property type="entry name" value="DNApol_viral_N"/>
</dbReference>
<dbReference type="InterPro" id="IPR037531">
    <property type="entry name" value="HBV_DPOL"/>
</dbReference>
<dbReference type="InterPro" id="IPR043128">
    <property type="entry name" value="Rev_trsase/Diguanyl_cyclase"/>
</dbReference>
<dbReference type="InterPro" id="IPR000477">
    <property type="entry name" value="RT_dom"/>
</dbReference>
<dbReference type="InterPro" id="IPR051320">
    <property type="entry name" value="Viral_Replic_Matur_Polypro"/>
</dbReference>
<dbReference type="PANTHER" id="PTHR33064:SF29">
    <property type="entry name" value="PEPTIDASE A2 DOMAIN-CONTAINING PROTEIN-RELATED"/>
    <property type="match status" value="1"/>
</dbReference>
<dbReference type="PANTHER" id="PTHR33064">
    <property type="entry name" value="POL PROTEIN"/>
    <property type="match status" value="1"/>
</dbReference>
<dbReference type="Pfam" id="PF00336">
    <property type="entry name" value="DNA_pol_viral_C"/>
    <property type="match status" value="1"/>
</dbReference>
<dbReference type="Pfam" id="PF00242">
    <property type="entry name" value="DNA_pol_viral_N"/>
    <property type="match status" value="1"/>
</dbReference>
<dbReference type="Pfam" id="PF00078">
    <property type="entry name" value="RVT_1"/>
    <property type="match status" value="1"/>
</dbReference>
<dbReference type="SUPFAM" id="SSF56672">
    <property type="entry name" value="DNA/RNA polymerases"/>
    <property type="match status" value="1"/>
</dbReference>
<dbReference type="PROSITE" id="PS50878">
    <property type="entry name" value="RT_POL"/>
    <property type="match status" value="1"/>
</dbReference>
<gene>
    <name evidence="1" type="primary">P</name>
</gene>
<feature type="chain" id="PRO_0000323261" description="Protein P">
    <location>
        <begin position="1"/>
        <end position="843"/>
    </location>
</feature>
<feature type="domain" description="Reverse transcriptase" evidence="1">
    <location>
        <begin position="357"/>
        <end position="600"/>
    </location>
</feature>
<feature type="region of interest" description="Terminal protein domain (TP)" evidence="1">
    <location>
        <begin position="1"/>
        <end position="177"/>
    </location>
</feature>
<feature type="region of interest" description="Spacer" evidence="1">
    <location>
        <begin position="178"/>
        <end position="346"/>
    </location>
</feature>
<feature type="region of interest" description="Polymerase/reverse transcriptase domain (RT)" evidence="1">
    <location>
        <begin position="347"/>
        <end position="690"/>
    </location>
</feature>
<feature type="binding site" evidence="1">
    <location>
        <position position="429"/>
    </location>
    <ligand>
        <name>Mg(2+)</name>
        <dbReference type="ChEBI" id="CHEBI:18420"/>
        <note>catalytic</note>
    </ligand>
</feature>
<feature type="binding site" evidence="1">
    <location>
        <position position="551"/>
    </location>
    <ligand>
        <name>Mg(2+)</name>
        <dbReference type="ChEBI" id="CHEBI:18420"/>
        <note>catalytic</note>
    </ligand>
</feature>
<feature type="binding site" evidence="1">
    <location>
        <position position="552"/>
    </location>
    <ligand>
        <name>Mg(2+)</name>
        <dbReference type="ChEBI" id="CHEBI:18420"/>
        <note>catalytic</note>
    </ligand>
</feature>
<feature type="site" description="Priming of reverse-transcription by covalently linking the first nucleotide of the (-)DNA" evidence="1">
    <location>
        <position position="63"/>
    </location>
</feature>
<name>DPOL_HBVC1</name>
<evidence type="ECO:0000255" key="1">
    <source>
        <dbReference type="HAMAP-Rule" id="MF_04073"/>
    </source>
</evidence>
<accession>P0C688</accession>
<reference key="1">
    <citation type="journal article" date="1983" name="Nucleic Acids Res.">
        <title>The complete nucleotide sequences of the cloned hepatitis B virus DNA; subtype adr and adw.</title>
        <authorList>
            <person name="Ono Y."/>
            <person name="Onda H."/>
            <person name="Sasada R."/>
            <person name="Igarashi K."/>
            <person name="Sugino Y."/>
            <person name="Nishioka K."/>
        </authorList>
    </citation>
    <scope>NUCLEOTIDE SEQUENCE [GENOMIC DNA]</scope>
</reference>
<reference key="2">
    <citation type="journal article" date="2007" name="World J. Gastroenterol.">
        <title>Hepatitis B virus replication.</title>
        <authorList>
            <person name="Beck J."/>
            <person name="Nassal M."/>
        </authorList>
    </citation>
    <scope>REVIEW</scope>
</reference>
<comment type="function">
    <text evidence="1">Multifunctional enzyme that converts the viral RNA genome into dsDNA in viral cytoplasmic capsids. This enzyme displays a DNA polymerase activity that can copy either DNA or RNA templates, and a ribonuclease H (RNase H) activity that cleaves the RNA strand of RNA-DNA heteroduplexes in a partially processive 3'- to 5'-endonucleasic mode. Neo-synthesized pregenomic RNA (pgRNA) are encapsidated together with the P protein, and reverse-transcribed inside the nucleocapsid. Initiation of reverse-transcription occurs first by binding the epsilon loop on the pgRNA genome, and is initiated by protein priming, thereby the 5'-end of (-)DNA is covalently linked to P protein. Partial (+)DNA is synthesized from the (-)DNA template and generates the relaxed circular DNA (RC-DNA) genome. After budding and infection, the RC-DNA migrates in the nucleus, and is converted into a plasmid-like covalently closed circular DNA (cccDNA). The activity of P protein does not seem to be necessary for cccDNA generation, and is presumably released from (+)DNA by host nuclear DNA repair machinery.</text>
</comment>
<comment type="catalytic activity">
    <reaction evidence="1">
        <text>DNA(n) + a 2'-deoxyribonucleoside 5'-triphosphate = DNA(n+1) + diphosphate</text>
        <dbReference type="Rhea" id="RHEA:22508"/>
        <dbReference type="Rhea" id="RHEA-COMP:17339"/>
        <dbReference type="Rhea" id="RHEA-COMP:17340"/>
        <dbReference type="ChEBI" id="CHEBI:33019"/>
        <dbReference type="ChEBI" id="CHEBI:61560"/>
        <dbReference type="ChEBI" id="CHEBI:173112"/>
        <dbReference type="EC" id="2.7.7.7"/>
    </reaction>
</comment>
<comment type="catalytic activity">
    <reaction evidence="1">
        <text>DNA(n) + a 2'-deoxyribonucleoside 5'-triphosphate = DNA(n+1) + diphosphate</text>
        <dbReference type="Rhea" id="RHEA:22508"/>
        <dbReference type="Rhea" id="RHEA-COMP:17339"/>
        <dbReference type="Rhea" id="RHEA-COMP:17340"/>
        <dbReference type="ChEBI" id="CHEBI:33019"/>
        <dbReference type="ChEBI" id="CHEBI:61560"/>
        <dbReference type="ChEBI" id="CHEBI:173112"/>
        <dbReference type="EC" id="2.7.7.49"/>
    </reaction>
</comment>
<comment type="catalytic activity">
    <reaction evidence="1">
        <text>Endonucleolytic cleavage to 5'-phosphomonoester.</text>
        <dbReference type="EC" id="3.1.26.4"/>
    </reaction>
</comment>
<comment type="activity regulation">
    <text evidence="1">Activated by host HSP70 and HSP40 in vitro to be able to bind the epsilon loop of the pgRNA. Because deletion of the RNase H region renders the protein partly chaperone-independent, the chaperones may be needed indirectly to relieve occlusion of the RNA-binding site by this domain. Inhibited by several reverse-transcriptase inhibitors: Lamivudine, Adefovir and Entecavir.</text>
</comment>
<comment type="domain">
    <text evidence="1">Terminal protein domain (TP) is hepadnavirus-specific. Spacer domain is highly variable and separates the TP and RT domains. Polymerase/reverse-transcriptase domain (RT) and ribonuclease H domain (RH) are similar to retrovirus reverse transcriptase/RNase H.</text>
</comment>
<comment type="domain">
    <text evidence="1">The polymerase/reverse transcriptase (RT) and ribonuclease H (RH) domains are structured in five subdomains: finger, palm, thumb, connection and RNase H. Within the palm subdomain, the 'primer grip' region is thought to be involved in the positioning of the primer terminus for accommodating the incoming nucleotide. The RH domain stabilizes the association of RT with primer-template.</text>
</comment>
<comment type="miscellaneous">
    <text evidence="1">Hepadnaviral virions contain probably just one P protein molecule per particle.</text>
</comment>
<comment type="similarity">
    <text evidence="1">Belongs to the hepadnaviridae P protein family.</text>
</comment>
<sequence length="843" mass="94284">MPLSYQHFRKLLLLDDEAGPLEEELPRLADEGLNRRVAEDLNLGNLNVSIPWTHKVGNFTGLYSSTVPVFNPEWQTPSFPNIHLQEDIINRCQQYVGPLTVNEKRRLKLIMPARFYPNLTKYLPLDKGIKPYYPEHAVNHYFKTRHYLHTLWKAGILYKRETTRSASFCGSPYSWEQELQHGRLVFQTSTRHGDESFCSQSSGILSRSPVGPCIRSQLKQSRLGLQPQQGSLARGKSGRSGSIWARVHSTTRRSFGVEPSGSGHIDNSASSASSCLYQSAVRKTAYSHLSTSKRQSSSGHAVELHNIPPSCARSQSEGPISSCWWLQFRNSEPCSDYCLTHIVNLLEDWGPCTEHGEHNIRIPRTPARVTGGVFLVDKNPHNTTESRLVVDFSQFSRGSTHVSWPKFAVPNLQSLTNLLSSNLSWLSLDVSAAFYHIPLHPAAMPHLLVGSSGLPRYVARLSSTSRNINYQHGTMQDLHDSCSRNLYVSLLLLYKTFGRKLHLYSHPIILGFRKIPMGVGLSPFLLAQFTSAICSVVRRAFPHCLAFSYMDDVVLGAKSVQHLESLFTSITNFLLSLGIHLNPHKTKRWGYSLNFMGYVIGSWGTLPQEHIVLKIKQCFRKLPVNRPIDWKVCQRIVGLLGFAAPFTQCGYPALMPLYACIQSKQAFTFSPTYKAFLCKQYLHLYPVARQRSGLCQVFADATPTGWGLAIGQSGMRGTFVAPLPIHTAELLAACFARSRSGAKLIGTDNSVVLSRKYTSFPWLLGCAANWILRGTSFVYVPSALNPADDPSRGRLGLYRPLLHLPFRPTTGRASLYAVSPSVPSHLPVRVHFASPLHVAWRPP</sequence>
<keyword id="KW-0235">DNA replication</keyword>
<keyword id="KW-0238">DNA-binding</keyword>
<keyword id="KW-0239">DNA-directed DNA polymerase</keyword>
<keyword id="KW-0255">Endonuclease</keyword>
<keyword id="KW-0945">Host-virus interaction</keyword>
<keyword id="KW-0378">Hydrolase</keyword>
<keyword id="KW-1090">Inhibition of host innate immune response by virus</keyword>
<keyword id="KW-1113">Inhibition of host RLR pathway by virus</keyword>
<keyword id="KW-0460">Magnesium</keyword>
<keyword id="KW-0479">Metal-binding</keyword>
<keyword id="KW-0511">Multifunctional enzyme</keyword>
<keyword id="KW-0540">Nuclease</keyword>
<keyword id="KW-0548">Nucleotidyltransferase</keyword>
<keyword id="KW-1185">Reference proteome</keyword>
<keyword id="KW-0695">RNA-directed DNA polymerase</keyword>
<keyword id="KW-0808">Transferase</keyword>
<keyword id="KW-0899">Viral immunoevasion</keyword>